<feature type="chain" id="PRO_1000010237" description="Ribosomal RNA small subunit methyltransferase G">
    <location>
        <begin position="1"/>
        <end position="206"/>
    </location>
</feature>
<feature type="binding site" evidence="1">
    <location>
        <position position="73"/>
    </location>
    <ligand>
        <name>S-adenosyl-L-methionine</name>
        <dbReference type="ChEBI" id="CHEBI:59789"/>
    </ligand>
</feature>
<feature type="binding site" evidence="1">
    <location>
        <position position="78"/>
    </location>
    <ligand>
        <name>S-adenosyl-L-methionine</name>
        <dbReference type="ChEBI" id="CHEBI:59789"/>
    </ligand>
</feature>
<feature type="binding site" evidence="1">
    <location>
        <begin position="124"/>
        <end position="125"/>
    </location>
    <ligand>
        <name>S-adenosyl-L-methionine</name>
        <dbReference type="ChEBI" id="CHEBI:59789"/>
    </ligand>
</feature>
<feature type="binding site" evidence="1">
    <location>
        <position position="139"/>
    </location>
    <ligand>
        <name>S-adenosyl-L-methionine</name>
        <dbReference type="ChEBI" id="CHEBI:59789"/>
    </ligand>
</feature>
<dbReference type="EC" id="2.1.1.170" evidence="1"/>
<dbReference type="EMBL" id="AM286415">
    <property type="protein sequence ID" value="CAL14228.1"/>
    <property type="molecule type" value="Genomic_DNA"/>
</dbReference>
<dbReference type="RefSeq" id="WP_005161183.1">
    <property type="nucleotide sequence ID" value="NC_008800.1"/>
</dbReference>
<dbReference type="RefSeq" id="YP_001008346.1">
    <property type="nucleotide sequence ID" value="NC_008800.1"/>
</dbReference>
<dbReference type="SMR" id="A1JTD7"/>
<dbReference type="GeneID" id="31410936"/>
<dbReference type="KEGG" id="yen:YE4214"/>
<dbReference type="PATRIC" id="fig|393305.7.peg.4482"/>
<dbReference type="eggNOG" id="COG0357">
    <property type="taxonomic scope" value="Bacteria"/>
</dbReference>
<dbReference type="HOGENOM" id="CLU_065341_2_2_6"/>
<dbReference type="OrthoDB" id="9808773at2"/>
<dbReference type="Proteomes" id="UP000000642">
    <property type="component" value="Chromosome"/>
</dbReference>
<dbReference type="GO" id="GO:0005829">
    <property type="term" value="C:cytosol"/>
    <property type="evidence" value="ECO:0007669"/>
    <property type="project" value="TreeGrafter"/>
</dbReference>
<dbReference type="GO" id="GO:0070043">
    <property type="term" value="F:rRNA (guanine-N7-)-methyltransferase activity"/>
    <property type="evidence" value="ECO:0007669"/>
    <property type="project" value="UniProtKB-UniRule"/>
</dbReference>
<dbReference type="CDD" id="cd02440">
    <property type="entry name" value="AdoMet_MTases"/>
    <property type="match status" value="1"/>
</dbReference>
<dbReference type="FunFam" id="3.40.50.150:FF:000032">
    <property type="entry name" value="Ribosomal RNA small subunit methyltransferase G"/>
    <property type="match status" value="1"/>
</dbReference>
<dbReference type="Gene3D" id="3.40.50.150">
    <property type="entry name" value="Vaccinia Virus protein VP39"/>
    <property type="match status" value="1"/>
</dbReference>
<dbReference type="HAMAP" id="MF_00074">
    <property type="entry name" value="16SrRNA_methyltr_G"/>
    <property type="match status" value="1"/>
</dbReference>
<dbReference type="InterPro" id="IPR003682">
    <property type="entry name" value="rRNA_ssu_MeTfrase_G"/>
</dbReference>
<dbReference type="InterPro" id="IPR029063">
    <property type="entry name" value="SAM-dependent_MTases_sf"/>
</dbReference>
<dbReference type="NCBIfam" id="TIGR00138">
    <property type="entry name" value="rsmG_gidB"/>
    <property type="match status" value="1"/>
</dbReference>
<dbReference type="PANTHER" id="PTHR31760">
    <property type="entry name" value="S-ADENOSYL-L-METHIONINE-DEPENDENT METHYLTRANSFERASES SUPERFAMILY PROTEIN"/>
    <property type="match status" value="1"/>
</dbReference>
<dbReference type="PANTHER" id="PTHR31760:SF0">
    <property type="entry name" value="S-ADENOSYL-L-METHIONINE-DEPENDENT METHYLTRANSFERASES SUPERFAMILY PROTEIN"/>
    <property type="match status" value="1"/>
</dbReference>
<dbReference type="Pfam" id="PF02527">
    <property type="entry name" value="GidB"/>
    <property type="match status" value="1"/>
</dbReference>
<dbReference type="PIRSF" id="PIRSF003078">
    <property type="entry name" value="GidB"/>
    <property type="match status" value="1"/>
</dbReference>
<dbReference type="SUPFAM" id="SSF53335">
    <property type="entry name" value="S-adenosyl-L-methionine-dependent methyltransferases"/>
    <property type="match status" value="1"/>
</dbReference>
<reference key="1">
    <citation type="journal article" date="2006" name="PLoS Genet.">
        <title>The complete genome sequence and comparative genome analysis of the high pathogenicity Yersinia enterocolitica strain 8081.</title>
        <authorList>
            <person name="Thomson N.R."/>
            <person name="Howard S."/>
            <person name="Wren B.W."/>
            <person name="Holden M.T.G."/>
            <person name="Crossman L."/>
            <person name="Challis G.L."/>
            <person name="Churcher C."/>
            <person name="Mungall K."/>
            <person name="Brooks K."/>
            <person name="Chillingworth T."/>
            <person name="Feltwell T."/>
            <person name="Abdellah Z."/>
            <person name="Hauser H."/>
            <person name="Jagels K."/>
            <person name="Maddison M."/>
            <person name="Moule S."/>
            <person name="Sanders M."/>
            <person name="Whitehead S."/>
            <person name="Quail M.A."/>
            <person name="Dougan G."/>
            <person name="Parkhill J."/>
            <person name="Prentice M.B."/>
        </authorList>
    </citation>
    <scope>NUCLEOTIDE SEQUENCE [LARGE SCALE GENOMIC DNA]</scope>
    <source>
        <strain>NCTC 13174 / 8081</strain>
    </source>
</reference>
<gene>
    <name evidence="1" type="primary">rsmG</name>
    <name type="ordered locus">YE4214</name>
</gene>
<sequence>MLKKLDSLLSAAGIELPDQQKHQLIGYVELLDKWNKAYNLTSVRDPMQMLVRHILDSIVVNPHLQGSRFIDVGTGPGLPGIPLAIVRPDAHFVLLDSLGKRVRFLRQVQHELGLSNIEPVQSRVEDFAAKPPFDGVISRAFASLQDMLSWCHHLPAKPEGRFYALKGVRPDDELATLPEGIVVESVVRLRVPELDGERHLVILKSN</sequence>
<proteinExistence type="inferred from homology"/>
<comment type="function">
    <text evidence="1">Specifically methylates the N7 position of guanine in position 527 of 16S rRNA.</text>
</comment>
<comment type="catalytic activity">
    <reaction evidence="1">
        <text>guanosine(527) in 16S rRNA + S-adenosyl-L-methionine = N(7)-methylguanosine(527) in 16S rRNA + S-adenosyl-L-homocysteine</text>
        <dbReference type="Rhea" id="RHEA:42732"/>
        <dbReference type="Rhea" id="RHEA-COMP:10209"/>
        <dbReference type="Rhea" id="RHEA-COMP:10210"/>
        <dbReference type="ChEBI" id="CHEBI:57856"/>
        <dbReference type="ChEBI" id="CHEBI:59789"/>
        <dbReference type="ChEBI" id="CHEBI:74269"/>
        <dbReference type="ChEBI" id="CHEBI:74480"/>
        <dbReference type="EC" id="2.1.1.170"/>
    </reaction>
</comment>
<comment type="subcellular location">
    <subcellularLocation>
        <location evidence="1">Cytoplasm</location>
    </subcellularLocation>
</comment>
<comment type="similarity">
    <text evidence="1">Belongs to the methyltransferase superfamily. RNA methyltransferase RsmG family.</text>
</comment>
<evidence type="ECO:0000255" key="1">
    <source>
        <dbReference type="HAMAP-Rule" id="MF_00074"/>
    </source>
</evidence>
<name>RSMG_YERE8</name>
<accession>A1JTD7</accession>
<organism>
    <name type="scientific">Yersinia enterocolitica serotype O:8 / biotype 1B (strain NCTC 13174 / 8081)</name>
    <dbReference type="NCBI Taxonomy" id="393305"/>
    <lineage>
        <taxon>Bacteria</taxon>
        <taxon>Pseudomonadati</taxon>
        <taxon>Pseudomonadota</taxon>
        <taxon>Gammaproteobacteria</taxon>
        <taxon>Enterobacterales</taxon>
        <taxon>Yersiniaceae</taxon>
        <taxon>Yersinia</taxon>
    </lineage>
</organism>
<keyword id="KW-0963">Cytoplasm</keyword>
<keyword id="KW-0489">Methyltransferase</keyword>
<keyword id="KW-0698">rRNA processing</keyword>
<keyword id="KW-0949">S-adenosyl-L-methionine</keyword>
<keyword id="KW-0808">Transferase</keyword>
<protein>
    <recommendedName>
        <fullName evidence="1">Ribosomal RNA small subunit methyltransferase G</fullName>
        <ecNumber evidence="1">2.1.1.170</ecNumber>
    </recommendedName>
    <alternativeName>
        <fullName evidence="1">16S rRNA 7-methylguanosine methyltransferase</fullName>
        <shortName evidence="1">16S rRNA m7G methyltransferase</shortName>
    </alternativeName>
</protein>